<evidence type="ECO:0000255" key="1">
    <source>
        <dbReference type="HAMAP-Rule" id="MF_00021"/>
    </source>
</evidence>
<keyword id="KW-0067">ATP-binding</keyword>
<keyword id="KW-0963">Cytoplasm</keyword>
<keyword id="KW-0547">Nucleotide-binding</keyword>
<keyword id="KW-1185">Reference proteome</keyword>
<keyword id="KW-0694">RNA-binding</keyword>
<keyword id="KW-0784">Thiamine biosynthesis</keyword>
<keyword id="KW-0808">Transferase</keyword>
<keyword id="KW-0820">tRNA-binding</keyword>
<protein>
    <recommendedName>
        <fullName evidence="1">Probable tRNA sulfurtransferase</fullName>
        <ecNumber evidence="1">2.8.1.4</ecNumber>
    </recommendedName>
    <alternativeName>
        <fullName evidence="1">Sulfur carrier protein ThiS sulfurtransferase</fullName>
    </alternativeName>
    <alternativeName>
        <fullName evidence="1">Thiamine biosynthesis protein ThiI</fullName>
    </alternativeName>
    <alternativeName>
        <fullName evidence="1">tRNA 4-thiouridine synthase</fullName>
    </alternativeName>
</protein>
<organism>
    <name type="scientific">Lachnospira eligens (strain ATCC 27750 / DSM 3376 / VPI C15-48 / C15-B4)</name>
    <name type="common">Eubacterium eligens</name>
    <dbReference type="NCBI Taxonomy" id="515620"/>
    <lineage>
        <taxon>Bacteria</taxon>
        <taxon>Bacillati</taxon>
        <taxon>Bacillota</taxon>
        <taxon>Clostridia</taxon>
        <taxon>Lachnospirales</taxon>
        <taxon>Lachnospiraceae</taxon>
        <taxon>Lachnospira</taxon>
    </lineage>
</organism>
<gene>
    <name evidence="1" type="primary">thiI</name>
    <name type="ordered locus">EUBELI_01160</name>
</gene>
<dbReference type="EC" id="2.8.1.4" evidence="1"/>
<dbReference type="EMBL" id="CP001104">
    <property type="protein sequence ID" value="ACR72160.1"/>
    <property type="molecule type" value="Genomic_DNA"/>
</dbReference>
<dbReference type="RefSeq" id="WP_012739395.1">
    <property type="nucleotide sequence ID" value="NC_012778.1"/>
</dbReference>
<dbReference type="SMR" id="C4Z0P7"/>
<dbReference type="STRING" id="515620.EUBELI_01160"/>
<dbReference type="GeneID" id="41355884"/>
<dbReference type="KEGG" id="eel:EUBELI_01160"/>
<dbReference type="eggNOG" id="COG0301">
    <property type="taxonomic scope" value="Bacteria"/>
</dbReference>
<dbReference type="HOGENOM" id="CLU_037952_4_0_9"/>
<dbReference type="UniPathway" id="UPA00060"/>
<dbReference type="Proteomes" id="UP000001476">
    <property type="component" value="Chromosome"/>
</dbReference>
<dbReference type="GO" id="GO:0005829">
    <property type="term" value="C:cytosol"/>
    <property type="evidence" value="ECO:0007669"/>
    <property type="project" value="TreeGrafter"/>
</dbReference>
<dbReference type="GO" id="GO:0005524">
    <property type="term" value="F:ATP binding"/>
    <property type="evidence" value="ECO:0007669"/>
    <property type="project" value="UniProtKB-UniRule"/>
</dbReference>
<dbReference type="GO" id="GO:0004810">
    <property type="term" value="F:CCA tRNA nucleotidyltransferase activity"/>
    <property type="evidence" value="ECO:0007669"/>
    <property type="project" value="InterPro"/>
</dbReference>
<dbReference type="GO" id="GO:0000049">
    <property type="term" value="F:tRNA binding"/>
    <property type="evidence" value="ECO:0007669"/>
    <property type="project" value="UniProtKB-UniRule"/>
</dbReference>
<dbReference type="GO" id="GO:0140741">
    <property type="term" value="F:tRNA-uracil-4 sulfurtransferase activity"/>
    <property type="evidence" value="ECO:0007669"/>
    <property type="project" value="UniProtKB-EC"/>
</dbReference>
<dbReference type="GO" id="GO:0009228">
    <property type="term" value="P:thiamine biosynthetic process"/>
    <property type="evidence" value="ECO:0007669"/>
    <property type="project" value="UniProtKB-KW"/>
</dbReference>
<dbReference type="GO" id="GO:0009229">
    <property type="term" value="P:thiamine diphosphate biosynthetic process"/>
    <property type="evidence" value="ECO:0007669"/>
    <property type="project" value="UniProtKB-UniRule"/>
</dbReference>
<dbReference type="GO" id="GO:0052837">
    <property type="term" value="P:thiazole biosynthetic process"/>
    <property type="evidence" value="ECO:0007669"/>
    <property type="project" value="TreeGrafter"/>
</dbReference>
<dbReference type="GO" id="GO:0002937">
    <property type="term" value="P:tRNA 4-thiouridine biosynthesis"/>
    <property type="evidence" value="ECO:0007669"/>
    <property type="project" value="TreeGrafter"/>
</dbReference>
<dbReference type="CDD" id="cd01712">
    <property type="entry name" value="PPase_ThiI"/>
    <property type="match status" value="1"/>
</dbReference>
<dbReference type="CDD" id="cd11716">
    <property type="entry name" value="THUMP_ThiI"/>
    <property type="match status" value="1"/>
</dbReference>
<dbReference type="FunFam" id="3.40.50.620:FF:000053">
    <property type="entry name" value="Probable tRNA sulfurtransferase"/>
    <property type="match status" value="1"/>
</dbReference>
<dbReference type="Gene3D" id="3.30.2130.30">
    <property type="match status" value="1"/>
</dbReference>
<dbReference type="Gene3D" id="3.40.50.620">
    <property type="entry name" value="HUPs"/>
    <property type="match status" value="1"/>
</dbReference>
<dbReference type="HAMAP" id="MF_00021">
    <property type="entry name" value="ThiI"/>
    <property type="match status" value="1"/>
</dbReference>
<dbReference type="InterPro" id="IPR014729">
    <property type="entry name" value="Rossmann-like_a/b/a_fold"/>
</dbReference>
<dbReference type="InterPro" id="IPR020536">
    <property type="entry name" value="ThiI_AANH"/>
</dbReference>
<dbReference type="InterPro" id="IPR054173">
    <property type="entry name" value="ThiI_fer"/>
</dbReference>
<dbReference type="InterPro" id="IPR049961">
    <property type="entry name" value="ThiI_N"/>
</dbReference>
<dbReference type="InterPro" id="IPR004114">
    <property type="entry name" value="THUMP_dom"/>
</dbReference>
<dbReference type="InterPro" id="IPR049962">
    <property type="entry name" value="THUMP_ThiI"/>
</dbReference>
<dbReference type="InterPro" id="IPR003720">
    <property type="entry name" value="tRNA_STrfase"/>
</dbReference>
<dbReference type="InterPro" id="IPR050102">
    <property type="entry name" value="tRNA_sulfurtransferase_ThiI"/>
</dbReference>
<dbReference type="NCBIfam" id="TIGR00342">
    <property type="entry name" value="tRNA uracil 4-sulfurtransferase ThiI"/>
    <property type="match status" value="1"/>
</dbReference>
<dbReference type="PANTHER" id="PTHR43209">
    <property type="entry name" value="TRNA SULFURTRANSFERASE"/>
    <property type="match status" value="1"/>
</dbReference>
<dbReference type="PANTHER" id="PTHR43209:SF1">
    <property type="entry name" value="TRNA SULFURTRANSFERASE"/>
    <property type="match status" value="1"/>
</dbReference>
<dbReference type="Pfam" id="PF02568">
    <property type="entry name" value="ThiI"/>
    <property type="match status" value="1"/>
</dbReference>
<dbReference type="Pfam" id="PF22025">
    <property type="entry name" value="ThiI_fer"/>
    <property type="match status" value="1"/>
</dbReference>
<dbReference type="Pfam" id="PF02926">
    <property type="entry name" value="THUMP"/>
    <property type="match status" value="1"/>
</dbReference>
<dbReference type="SMART" id="SM00981">
    <property type="entry name" value="THUMP"/>
    <property type="match status" value="1"/>
</dbReference>
<dbReference type="SUPFAM" id="SSF52402">
    <property type="entry name" value="Adenine nucleotide alpha hydrolases-like"/>
    <property type="match status" value="1"/>
</dbReference>
<dbReference type="SUPFAM" id="SSF143437">
    <property type="entry name" value="THUMP domain-like"/>
    <property type="match status" value="1"/>
</dbReference>
<dbReference type="PROSITE" id="PS51165">
    <property type="entry name" value="THUMP"/>
    <property type="match status" value="1"/>
</dbReference>
<feature type="chain" id="PRO_1000201913" description="Probable tRNA sulfurtransferase">
    <location>
        <begin position="1"/>
        <end position="393"/>
    </location>
</feature>
<feature type="domain" description="THUMP" evidence="1">
    <location>
        <begin position="61"/>
        <end position="168"/>
    </location>
</feature>
<feature type="binding site" evidence="1">
    <location>
        <begin position="186"/>
        <end position="187"/>
    </location>
    <ligand>
        <name>ATP</name>
        <dbReference type="ChEBI" id="CHEBI:30616"/>
    </ligand>
</feature>
<feature type="binding site" evidence="1">
    <location>
        <begin position="211"/>
        <end position="212"/>
    </location>
    <ligand>
        <name>ATP</name>
        <dbReference type="ChEBI" id="CHEBI:30616"/>
    </ligand>
</feature>
<feature type="binding site" evidence="1">
    <location>
        <position position="268"/>
    </location>
    <ligand>
        <name>ATP</name>
        <dbReference type="ChEBI" id="CHEBI:30616"/>
    </ligand>
</feature>
<feature type="binding site" evidence="1">
    <location>
        <position position="290"/>
    </location>
    <ligand>
        <name>ATP</name>
        <dbReference type="ChEBI" id="CHEBI:30616"/>
    </ligand>
</feature>
<feature type="binding site" evidence="1">
    <location>
        <position position="299"/>
    </location>
    <ligand>
        <name>ATP</name>
        <dbReference type="ChEBI" id="CHEBI:30616"/>
    </ligand>
</feature>
<sequence>MYKAFLIKYGEIGVKGKNRFIFEDALVRQIKFSLKDVEGEFDVRRADGRIYVNALADYDYDEVIESLTRVFGIVGICPVVQIEDNGFDDLANQVINYLDKAYKNKNLTFKVNARRTRKNYPMNSMEINMELGGRILDAFPEMKVDVHKPEVLLQVEIRGDVINIYSIEVPGPGGMPIGTAGKAMLLLSGGIDSPVAGYMVAKRGVQIEATYFHAPPYTSERAKQKVIDLAKIVSKYSGPITLNVVNFTDIQMAIYEKCPHDELTIIMRRYMMKIAEDLGKSSGCQGLVTGESIGQVASQTMASLYCTNEVCTMPVFRPVIGFDKQEIIDISEKIGSYETSIQPFEDCCTIFVAKHPVTKPNLNIIKQHETNLDGVIEELYKTAIETTEKIVIE</sequence>
<name>THII_LACE2</name>
<accession>C4Z0P7</accession>
<proteinExistence type="inferred from homology"/>
<comment type="function">
    <text evidence="1">Catalyzes the ATP-dependent transfer of a sulfur to tRNA to produce 4-thiouridine in position 8 of tRNAs, which functions as a near-UV photosensor. Also catalyzes the transfer of sulfur to the sulfur carrier protein ThiS, forming ThiS-thiocarboxylate. This is a step in the synthesis of thiazole, in the thiamine biosynthesis pathway. The sulfur is donated as persulfide by IscS.</text>
</comment>
<comment type="catalytic activity">
    <reaction evidence="1">
        <text>[ThiI sulfur-carrier protein]-S-sulfanyl-L-cysteine + a uridine in tRNA + 2 reduced [2Fe-2S]-[ferredoxin] + ATP + H(+) = [ThiI sulfur-carrier protein]-L-cysteine + a 4-thiouridine in tRNA + 2 oxidized [2Fe-2S]-[ferredoxin] + AMP + diphosphate</text>
        <dbReference type="Rhea" id="RHEA:24176"/>
        <dbReference type="Rhea" id="RHEA-COMP:10000"/>
        <dbReference type="Rhea" id="RHEA-COMP:10001"/>
        <dbReference type="Rhea" id="RHEA-COMP:13337"/>
        <dbReference type="Rhea" id="RHEA-COMP:13338"/>
        <dbReference type="Rhea" id="RHEA-COMP:13339"/>
        <dbReference type="Rhea" id="RHEA-COMP:13340"/>
        <dbReference type="ChEBI" id="CHEBI:15378"/>
        <dbReference type="ChEBI" id="CHEBI:29950"/>
        <dbReference type="ChEBI" id="CHEBI:30616"/>
        <dbReference type="ChEBI" id="CHEBI:33019"/>
        <dbReference type="ChEBI" id="CHEBI:33737"/>
        <dbReference type="ChEBI" id="CHEBI:33738"/>
        <dbReference type="ChEBI" id="CHEBI:61963"/>
        <dbReference type="ChEBI" id="CHEBI:65315"/>
        <dbReference type="ChEBI" id="CHEBI:136798"/>
        <dbReference type="ChEBI" id="CHEBI:456215"/>
        <dbReference type="EC" id="2.8.1.4"/>
    </reaction>
</comment>
<comment type="catalytic activity">
    <reaction evidence="1">
        <text>[ThiS sulfur-carrier protein]-C-terminal Gly-Gly-AMP + S-sulfanyl-L-cysteinyl-[cysteine desulfurase] + AH2 = [ThiS sulfur-carrier protein]-C-terminal-Gly-aminoethanethioate + L-cysteinyl-[cysteine desulfurase] + A + AMP + 2 H(+)</text>
        <dbReference type="Rhea" id="RHEA:43340"/>
        <dbReference type="Rhea" id="RHEA-COMP:12157"/>
        <dbReference type="Rhea" id="RHEA-COMP:12158"/>
        <dbReference type="Rhea" id="RHEA-COMP:12910"/>
        <dbReference type="Rhea" id="RHEA-COMP:19908"/>
        <dbReference type="ChEBI" id="CHEBI:13193"/>
        <dbReference type="ChEBI" id="CHEBI:15378"/>
        <dbReference type="ChEBI" id="CHEBI:17499"/>
        <dbReference type="ChEBI" id="CHEBI:29950"/>
        <dbReference type="ChEBI" id="CHEBI:61963"/>
        <dbReference type="ChEBI" id="CHEBI:90618"/>
        <dbReference type="ChEBI" id="CHEBI:232372"/>
        <dbReference type="ChEBI" id="CHEBI:456215"/>
    </reaction>
</comment>
<comment type="pathway">
    <text evidence="1">Cofactor biosynthesis; thiamine diphosphate biosynthesis.</text>
</comment>
<comment type="subcellular location">
    <subcellularLocation>
        <location evidence="1">Cytoplasm</location>
    </subcellularLocation>
</comment>
<comment type="similarity">
    <text evidence="1">Belongs to the ThiI family.</text>
</comment>
<reference key="1">
    <citation type="journal article" date="2009" name="Proc. Natl. Acad. Sci. U.S.A.">
        <title>Characterizing a model human gut microbiota composed of members of its two dominant bacterial phyla.</title>
        <authorList>
            <person name="Mahowald M.A."/>
            <person name="Rey F.E."/>
            <person name="Seedorf H."/>
            <person name="Turnbaugh P.J."/>
            <person name="Fulton R.S."/>
            <person name="Wollam A."/>
            <person name="Shah N."/>
            <person name="Wang C."/>
            <person name="Magrini V."/>
            <person name="Wilson R.K."/>
            <person name="Cantarel B.L."/>
            <person name="Coutinho P.M."/>
            <person name="Henrissat B."/>
            <person name="Crock L.W."/>
            <person name="Russell A."/>
            <person name="Verberkmoes N.C."/>
            <person name="Hettich R.L."/>
            <person name="Gordon J.I."/>
        </authorList>
    </citation>
    <scope>NUCLEOTIDE SEQUENCE [LARGE SCALE GENOMIC DNA]</scope>
    <source>
        <strain>ATCC 27750 / DSM 3376 / VPI C15-48 / C15-B4</strain>
    </source>
</reference>